<name>C70B1_ARATH</name>
<evidence type="ECO:0000250" key="1"/>
<evidence type="ECO:0000255" key="2"/>
<evidence type="ECO:0000269" key="3">
    <source>
    </source>
</evidence>
<evidence type="ECO:0000305" key="4"/>
<organism>
    <name type="scientific">Arabidopsis thaliana</name>
    <name type="common">Mouse-ear cress</name>
    <dbReference type="NCBI Taxonomy" id="3702"/>
    <lineage>
        <taxon>Eukaryota</taxon>
        <taxon>Viridiplantae</taxon>
        <taxon>Streptophyta</taxon>
        <taxon>Embryophyta</taxon>
        <taxon>Tracheophyta</taxon>
        <taxon>Spermatophyta</taxon>
        <taxon>Magnoliopsida</taxon>
        <taxon>eudicotyledons</taxon>
        <taxon>Gunneridae</taxon>
        <taxon>Pentapetalae</taxon>
        <taxon>rosids</taxon>
        <taxon>malvids</taxon>
        <taxon>Brassicales</taxon>
        <taxon>Brassicaceae</taxon>
        <taxon>Camelineae</taxon>
        <taxon>Arabidopsis</taxon>
    </lineage>
</organism>
<comment type="function">
    <text evidence="3">Involved in pollen wall development. Catalyzes the conversion of long-chain fatty acids to the corresponding omega-hydroxylated fatty acids. Omega-hydroxylated fatty acids, together with in-chain hydroxylated fatty acids, are key monomeric aliphatic building blocks for sporopollenin synthesis during exine formation.</text>
</comment>
<comment type="catalytic activity">
    <reaction evidence="3">
        <text>an omega-methyl-long-chain fatty acid + reduced [NADPH--hemoprotein reductase] + O2 = an omega-hydroxy-long-chain fatty acid + oxidized [NADPH--hemoprotein reductase] + H2O + H(+)</text>
        <dbReference type="Rhea" id="RHEA:56748"/>
        <dbReference type="Rhea" id="RHEA-COMP:11964"/>
        <dbReference type="Rhea" id="RHEA-COMP:11965"/>
        <dbReference type="ChEBI" id="CHEBI:15377"/>
        <dbReference type="ChEBI" id="CHEBI:15378"/>
        <dbReference type="ChEBI" id="CHEBI:15379"/>
        <dbReference type="ChEBI" id="CHEBI:57618"/>
        <dbReference type="ChEBI" id="CHEBI:58210"/>
        <dbReference type="ChEBI" id="CHEBI:140991"/>
        <dbReference type="ChEBI" id="CHEBI:140992"/>
        <dbReference type="EC" id="1.14.14.80"/>
    </reaction>
</comment>
<comment type="cofactor">
    <cofactor evidence="1">
        <name>heme</name>
        <dbReference type="ChEBI" id="CHEBI:30413"/>
    </cofactor>
</comment>
<comment type="subcellular location">
    <subcellularLocation>
        <location evidence="4">Membrane</location>
        <topology evidence="4">Single-pass membrane protein</topology>
    </subcellularLocation>
</comment>
<comment type="developmental stage">
    <text evidence="3">Specifically expressed in anthers from early stage 9 to early stage 12 of flower development, with a peak during stages 9 to 11.</text>
</comment>
<comment type="disruption phenotype">
    <text evidence="3">Lack of exine in pollen grain walls.</text>
</comment>
<comment type="similarity">
    <text evidence="4">Belongs to the cytochrome P450 family.</text>
</comment>
<comment type="sequence caution" evidence="4">
    <conflict type="erroneous termination">
        <sequence resource="EMBL-CDS" id="ABK28457"/>
    </conflict>
    <text>Extended C-terminus.</text>
</comment>
<comment type="sequence caution" evidence="4">
    <conflict type="erroneous initiation">
        <sequence resource="EMBL-CDS" id="BAC43393"/>
    </conflict>
    <text>Truncated N-terminus.</text>
</comment>
<sequence>MSLCLVIACMVTSWIFLHRWGQRNKSGPKTWPLVGAAIEQLTNFDRMHDWLVEYLYNSRTVVVPMPFTTYTYIADPINVEYVLKTNFSNYPKGETYHSYMEVLLGDGIFNSDGELWRKQRKTASFEFASKNLRDFSTVVFKEYSLKLFTILSQASFKEQQVDMQELLMRMTLDSICKVGFGVEIGTLAPELPENHFAKAFDTANIIVTLRFIDPLWKMKKFLNIGSEALLGKSIKVVNDFTYSVIRRRKAELLEAQISPTNNNNNNNNKVKHDILSRFIEISDDPDSKETEKSLRDIVLNFVIAGRDTTATTLTWAIYMIMMNENVAEKLYSELQELEKESAEATNTSLHQYDTEDFNSFNEKVTEFAGLLNYDSLGKLHYLHAVITETLRLYPAVPQDPKGVLEDDMLPNGTKVKAGGMVTYVPYSMGRMEYNWGSDAALFKPERWLKDGVFQNASPFKFTAFQAGPRICLGKDSAYLQMKMAMAILCRFYKFHLVPNHPVKYRMMTILSMAHGLKVTVSRRS</sequence>
<proteinExistence type="evidence at protein level"/>
<reference key="1">
    <citation type="journal article" date="2000" name="Nature">
        <title>Sequence and analysis of chromosome 1 of the plant Arabidopsis thaliana.</title>
        <authorList>
            <person name="Theologis A."/>
            <person name="Ecker J.R."/>
            <person name="Palm C.J."/>
            <person name="Federspiel N.A."/>
            <person name="Kaul S."/>
            <person name="White O."/>
            <person name="Alonso J."/>
            <person name="Altafi H."/>
            <person name="Araujo R."/>
            <person name="Bowman C.L."/>
            <person name="Brooks S.Y."/>
            <person name="Buehler E."/>
            <person name="Chan A."/>
            <person name="Chao Q."/>
            <person name="Chen H."/>
            <person name="Cheuk R.F."/>
            <person name="Chin C.W."/>
            <person name="Chung M.K."/>
            <person name="Conn L."/>
            <person name="Conway A.B."/>
            <person name="Conway A.R."/>
            <person name="Creasy T.H."/>
            <person name="Dewar K."/>
            <person name="Dunn P."/>
            <person name="Etgu P."/>
            <person name="Feldblyum T.V."/>
            <person name="Feng J.-D."/>
            <person name="Fong B."/>
            <person name="Fujii C.Y."/>
            <person name="Gill J.E."/>
            <person name="Goldsmith A.D."/>
            <person name="Haas B."/>
            <person name="Hansen N.F."/>
            <person name="Hughes B."/>
            <person name="Huizar L."/>
            <person name="Hunter J.L."/>
            <person name="Jenkins J."/>
            <person name="Johnson-Hopson C."/>
            <person name="Khan S."/>
            <person name="Khaykin E."/>
            <person name="Kim C.J."/>
            <person name="Koo H.L."/>
            <person name="Kremenetskaia I."/>
            <person name="Kurtz D.B."/>
            <person name="Kwan A."/>
            <person name="Lam B."/>
            <person name="Langin-Hooper S."/>
            <person name="Lee A."/>
            <person name="Lee J.M."/>
            <person name="Lenz C.A."/>
            <person name="Li J.H."/>
            <person name="Li Y.-P."/>
            <person name="Lin X."/>
            <person name="Liu S.X."/>
            <person name="Liu Z.A."/>
            <person name="Luros J.S."/>
            <person name="Maiti R."/>
            <person name="Marziali A."/>
            <person name="Militscher J."/>
            <person name="Miranda M."/>
            <person name="Nguyen M."/>
            <person name="Nierman W.C."/>
            <person name="Osborne B.I."/>
            <person name="Pai G."/>
            <person name="Peterson J."/>
            <person name="Pham P.K."/>
            <person name="Rizzo M."/>
            <person name="Rooney T."/>
            <person name="Rowley D."/>
            <person name="Sakano H."/>
            <person name="Salzberg S.L."/>
            <person name="Schwartz J.R."/>
            <person name="Shinn P."/>
            <person name="Southwick A.M."/>
            <person name="Sun H."/>
            <person name="Tallon L.J."/>
            <person name="Tambunga G."/>
            <person name="Toriumi M.J."/>
            <person name="Town C.D."/>
            <person name="Utterback T."/>
            <person name="Van Aken S."/>
            <person name="Vaysberg M."/>
            <person name="Vysotskaia V.S."/>
            <person name="Walker M."/>
            <person name="Wu D."/>
            <person name="Yu G."/>
            <person name="Fraser C.M."/>
            <person name="Venter J.C."/>
            <person name="Davis R.W."/>
        </authorList>
    </citation>
    <scope>NUCLEOTIDE SEQUENCE [LARGE SCALE GENOMIC DNA]</scope>
    <source>
        <strain>cv. Columbia</strain>
    </source>
</reference>
<reference key="2">
    <citation type="journal article" date="2017" name="Plant J.">
        <title>Araport11: a complete reannotation of the Arabidopsis thaliana reference genome.</title>
        <authorList>
            <person name="Cheng C.Y."/>
            <person name="Krishnakumar V."/>
            <person name="Chan A.P."/>
            <person name="Thibaud-Nissen F."/>
            <person name="Schobel S."/>
            <person name="Town C.D."/>
        </authorList>
    </citation>
    <scope>GENOME REANNOTATION</scope>
    <source>
        <strain>cv. Columbia</strain>
    </source>
</reference>
<reference key="3">
    <citation type="journal article" date="2002" name="Science">
        <title>Functional annotation of a full-length Arabidopsis cDNA collection.</title>
        <authorList>
            <person name="Seki M."/>
            <person name="Narusaka M."/>
            <person name="Kamiya A."/>
            <person name="Ishida J."/>
            <person name="Satou M."/>
            <person name="Sakurai T."/>
            <person name="Nakajima M."/>
            <person name="Enju A."/>
            <person name="Akiyama K."/>
            <person name="Oono Y."/>
            <person name="Muramatsu M."/>
            <person name="Hayashizaki Y."/>
            <person name="Kawai J."/>
            <person name="Carninci P."/>
            <person name="Itoh M."/>
            <person name="Ishii Y."/>
            <person name="Arakawa T."/>
            <person name="Shibata K."/>
            <person name="Shinagawa A."/>
            <person name="Shinozaki K."/>
        </authorList>
    </citation>
    <scope>NUCLEOTIDE SEQUENCE [LARGE SCALE MRNA] OF 11-524</scope>
    <source>
        <strain>cv. Columbia</strain>
    </source>
</reference>
<reference key="4">
    <citation type="journal article" date="2006" name="Plant Biotechnol. J.">
        <title>Simultaneous high-throughput recombinational cloning of open reading frames in closed and open configurations.</title>
        <authorList>
            <person name="Underwood B.A."/>
            <person name="Vanderhaeghen R."/>
            <person name="Whitford R."/>
            <person name="Town C.D."/>
            <person name="Hilson P."/>
        </authorList>
    </citation>
    <scope>NUCLEOTIDE SEQUENCE [LARGE SCALE MRNA] OF 47-524</scope>
    <source>
        <strain>cv. Columbia</strain>
    </source>
</reference>
<reference key="5">
    <citation type="journal article" date="2009" name="Plant Physiol.">
        <title>CYP704B1 is a long-chain fatty acid omega-hydroxylase essential for sporopollenin synthesis in pollen of Arabidopsis.</title>
        <authorList>
            <person name="Dobritsa A.A."/>
            <person name="Shrestha J."/>
            <person name="Morant M."/>
            <person name="Pinot F."/>
            <person name="Matsuno M."/>
            <person name="Swanson R."/>
            <person name="Moller B.L."/>
            <person name="Preuss D."/>
        </authorList>
    </citation>
    <scope>FUNCTION</scope>
    <scope>CATALYTIC ACTIVITY</scope>
    <scope>DEVELOPMENTAL STAGE</scope>
    <scope>DISRUPTION PHENOTYPE</scope>
</reference>
<dbReference type="EC" id="1.14.14.80" evidence="3"/>
<dbReference type="EMBL" id="AC073178">
    <property type="protein sequence ID" value="AAG60111.1"/>
    <property type="molecule type" value="Genomic_DNA"/>
</dbReference>
<dbReference type="EMBL" id="CP002684">
    <property type="protein sequence ID" value="AEE34933.1"/>
    <property type="molecule type" value="Genomic_DNA"/>
</dbReference>
<dbReference type="EMBL" id="AK118803">
    <property type="protein sequence ID" value="BAC43393.1"/>
    <property type="status" value="ALT_INIT"/>
    <property type="molecule type" value="mRNA"/>
</dbReference>
<dbReference type="EMBL" id="DQ446413">
    <property type="protein sequence ID" value="ABE65757.1"/>
    <property type="molecule type" value="mRNA"/>
</dbReference>
<dbReference type="EMBL" id="DQ652922">
    <property type="protein sequence ID" value="ABK28457.1"/>
    <property type="status" value="ALT_SEQ"/>
    <property type="molecule type" value="mRNA"/>
</dbReference>
<dbReference type="RefSeq" id="NP_177109.3">
    <property type="nucleotide sequence ID" value="NM_105617.3"/>
</dbReference>
<dbReference type="SMR" id="Q9C788"/>
<dbReference type="FunCoup" id="Q9C788">
    <property type="interactions" value="292"/>
</dbReference>
<dbReference type="IntAct" id="Q9C788">
    <property type="interactions" value="3"/>
</dbReference>
<dbReference type="STRING" id="3702.Q9C788"/>
<dbReference type="iPTMnet" id="Q9C788"/>
<dbReference type="PaxDb" id="3702-AT1G69500.1"/>
<dbReference type="EnsemblPlants" id="AT1G69500.1">
    <property type="protein sequence ID" value="AT1G69500.1"/>
    <property type="gene ID" value="AT1G69500"/>
</dbReference>
<dbReference type="GeneID" id="843283"/>
<dbReference type="Gramene" id="AT1G69500.1">
    <property type="protein sequence ID" value="AT1G69500.1"/>
    <property type="gene ID" value="AT1G69500"/>
</dbReference>
<dbReference type="KEGG" id="ath:AT1G69500"/>
<dbReference type="Araport" id="AT1G69500"/>
<dbReference type="TAIR" id="AT1G69500">
    <property type="gene designation" value="CYP704B1"/>
</dbReference>
<dbReference type="eggNOG" id="KOG0157">
    <property type="taxonomic scope" value="Eukaryota"/>
</dbReference>
<dbReference type="HOGENOM" id="CLU_001570_27_2_1"/>
<dbReference type="InParanoid" id="Q9C788"/>
<dbReference type="OMA" id="EMIPGPT"/>
<dbReference type="PhylomeDB" id="Q9C788"/>
<dbReference type="BioCyc" id="MetaCyc:AT1G69500-MONOMER"/>
<dbReference type="BRENDA" id="1.14.14.80">
    <property type="organism ID" value="399"/>
</dbReference>
<dbReference type="PRO" id="PR:Q9C788"/>
<dbReference type="Proteomes" id="UP000006548">
    <property type="component" value="Chromosome 1"/>
</dbReference>
<dbReference type="ExpressionAtlas" id="Q9C788">
    <property type="expression patterns" value="baseline and differential"/>
</dbReference>
<dbReference type="GO" id="GO:0016020">
    <property type="term" value="C:membrane"/>
    <property type="evidence" value="ECO:0007669"/>
    <property type="project" value="UniProtKB-SubCell"/>
</dbReference>
<dbReference type="GO" id="GO:0018685">
    <property type="term" value="F:alkane 1-monooxygenase activity"/>
    <property type="evidence" value="ECO:0000314"/>
    <property type="project" value="TAIR"/>
</dbReference>
<dbReference type="GO" id="GO:0020037">
    <property type="term" value="F:heme binding"/>
    <property type="evidence" value="ECO:0007669"/>
    <property type="project" value="InterPro"/>
</dbReference>
<dbReference type="GO" id="GO:0005506">
    <property type="term" value="F:iron ion binding"/>
    <property type="evidence" value="ECO:0007669"/>
    <property type="project" value="InterPro"/>
</dbReference>
<dbReference type="GO" id="GO:0102033">
    <property type="term" value="F:long-chain fatty acid omega-hydroxylase activity"/>
    <property type="evidence" value="ECO:0007669"/>
    <property type="project" value="UniProtKB-EC"/>
</dbReference>
<dbReference type="GO" id="GO:0010584">
    <property type="term" value="P:pollen exine formation"/>
    <property type="evidence" value="ECO:0000315"/>
    <property type="project" value="TAIR"/>
</dbReference>
<dbReference type="GO" id="GO:0080110">
    <property type="term" value="P:sporopollenin biosynthetic process"/>
    <property type="evidence" value="ECO:0000315"/>
    <property type="project" value="TAIR"/>
</dbReference>
<dbReference type="CDD" id="cd11064">
    <property type="entry name" value="CYP86A"/>
    <property type="match status" value="1"/>
</dbReference>
<dbReference type="FunFam" id="1.10.630.10:FF:000119">
    <property type="entry name" value="Alkane hydroxylase MAH1"/>
    <property type="match status" value="1"/>
</dbReference>
<dbReference type="Gene3D" id="1.10.630.10">
    <property type="entry name" value="Cytochrome P450"/>
    <property type="match status" value="1"/>
</dbReference>
<dbReference type="InterPro" id="IPR001128">
    <property type="entry name" value="Cyt_P450"/>
</dbReference>
<dbReference type="InterPro" id="IPR002401">
    <property type="entry name" value="Cyt_P450_E_grp-I"/>
</dbReference>
<dbReference type="InterPro" id="IPR036396">
    <property type="entry name" value="Cyt_P450_sf"/>
</dbReference>
<dbReference type="PANTHER" id="PTHR24296">
    <property type="entry name" value="CYTOCHROME P450"/>
    <property type="match status" value="1"/>
</dbReference>
<dbReference type="Pfam" id="PF00067">
    <property type="entry name" value="p450"/>
    <property type="match status" value="1"/>
</dbReference>
<dbReference type="PRINTS" id="PR00463">
    <property type="entry name" value="EP450I"/>
</dbReference>
<dbReference type="PRINTS" id="PR00385">
    <property type="entry name" value="P450"/>
</dbReference>
<dbReference type="SUPFAM" id="SSF48264">
    <property type="entry name" value="Cytochrome P450"/>
    <property type="match status" value="1"/>
</dbReference>
<protein>
    <recommendedName>
        <fullName>Cytochrome P450 704B1</fullName>
    </recommendedName>
    <alternativeName>
        <fullName>Long-chain fatty acid omega-hydroxylase</fullName>
        <ecNumber evidence="3">1.14.14.80</ecNumber>
    </alternativeName>
</protein>
<keyword id="KW-0349">Heme</keyword>
<keyword id="KW-0408">Iron</keyword>
<keyword id="KW-0472">Membrane</keyword>
<keyword id="KW-0479">Metal-binding</keyword>
<keyword id="KW-0503">Monooxygenase</keyword>
<keyword id="KW-0521">NADP</keyword>
<keyword id="KW-0560">Oxidoreductase</keyword>
<keyword id="KW-1185">Reference proteome</keyword>
<keyword id="KW-0812">Transmembrane</keyword>
<keyword id="KW-1133">Transmembrane helix</keyword>
<gene>
    <name type="primary">CYP704B1</name>
    <name type="ordered locus">At1g69500</name>
    <name type="ORF">F10D13.15</name>
</gene>
<accession>Q9C788</accession>
<accession>A0MEF2</accession>
<accession>Q8GWJ5</accession>
<feature type="chain" id="PRO_0000425851" description="Cytochrome P450 704B1">
    <location>
        <begin position="1"/>
        <end position="524"/>
    </location>
</feature>
<feature type="transmembrane region" description="Helical" evidence="2">
    <location>
        <begin position="2"/>
        <end position="22"/>
    </location>
</feature>
<feature type="binding site" description="axial binding residue" evidence="1">
    <location>
        <position position="471"/>
    </location>
    <ligand>
        <name>heme</name>
        <dbReference type="ChEBI" id="CHEBI:30413"/>
    </ligand>
    <ligandPart>
        <name>Fe</name>
        <dbReference type="ChEBI" id="CHEBI:18248"/>
    </ligandPart>
</feature>